<comment type="function">
    <text evidence="2">Multifunctional protein which displays endonuclease and helicase activities required for initiating and directing viral DNA replication. Also plays a role in viral packaging and transactivation of several promoters. Binds site-specifically to 2-3 approximate tandem copies within the origins of replication (Ori), unwinds this hairpin region and nicks one DNA strand thereby initiating the rolling circle replication (RCR). Cooperatively binds Ori with host PIF and probably other host factors, which activate the nickase function of NS1. Becomes covalently attached to the 5' end of the nick and provides a 3'OH for priming DNA synthesis. The helicase activity unwinds DNA in a 3'-5' direction on the longer strand. Inhibits the host cell cycle during the G1/S transition, the S-phase, and the G2/M transition. These arrests may provide essential cellular factors for viral DNA replication. Promotes apoptosis in host cell.</text>
</comment>
<comment type="catalytic activity">
    <reaction evidence="2">
        <text>ATP + H2O = ADP + phosphate + H(+)</text>
        <dbReference type="Rhea" id="RHEA:13065"/>
        <dbReference type="ChEBI" id="CHEBI:15377"/>
        <dbReference type="ChEBI" id="CHEBI:15378"/>
        <dbReference type="ChEBI" id="CHEBI:30616"/>
        <dbReference type="ChEBI" id="CHEBI:43474"/>
        <dbReference type="ChEBI" id="CHEBI:456216"/>
        <dbReference type="EC" id="3.6.4.12"/>
    </reaction>
</comment>
<comment type="cofactor">
    <cofactor evidence="2">
        <name>Mg(2+)</name>
        <dbReference type="ChEBI" id="CHEBI:18420"/>
    </cofactor>
    <text evidence="2">The endonuclease active site can probably bind other divalent cations.</text>
</comment>
<comment type="subunit">
    <text evidence="3">Homooligomer; when bound to DNA.</text>
</comment>
<comment type="subcellular location">
    <subcellularLocation>
        <location evidence="1">Host nucleus</location>
    </subcellularLocation>
</comment>
<comment type="domain">
    <text evidence="2 3">In the N-terminus, the endonuclease region is involved in binding to the origin of replication. In the middle, there are the ATPase and helicase activities (By similarity). The C-terminus probably contains a transactivation domain (By similarity).</text>
</comment>
<comment type="PTM">
    <text evidence="2">Phosphorylated.</text>
</comment>
<comment type="similarity">
    <text evidence="6">Belongs to the parvoviruses initiator protein NS1 family.</text>
</comment>
<dbReference type="EC" id="3.1.21.-" evidence="3"/>
<dbReference type="EC" id="3.6.4.12" evidence="3"/>
<dbReference type="EMBL" id="D00623">
    <property type="protein sequence ID" value="BAA00501.1"/>
    <property type="molecule type" value="Genomic_DNA"/>
</dbReference>
<dbReference type="EMBL" id="M38367">
    <property type="protein sequence ID" value="AAA46920.1"/>
    <property type="molecule type" value="Genomic_DNA"/>
</dbReference>
<dbReference type="EMBL" id="M32787">
    <property type="protein sequence ID" value="AAA46916.1"/>
    <property type="molecule type" value="Genomic_DNA"/>
</dbReference>
<dbReference type="PIR" id="A33302">
    <property type="entry name" value="UYPVPP"/>
</dbReference>
<dbReference type="SMR" id="P18547"/>
<dbReference type="KEGG" id="vg:1489594"/>
<dbReference type="Proteomes" id="UP000008155">
    <property type="component" value="Genome"/>
</dbReference>
<dbReference type="GO" id="GO:0042025">
    <property type="term" value="C:host cell nucleus"/>
    <property type="evidence" value="ECO:0007669"/>
    <property type="project" value="UniProtKB-SubCell"/>
</dbReference>
<dbReference type="GO" id="GO:0005524">
    <property type="term" value="F:ATP binding"/>
    <property type="evidence" value="ECO:0007669"/>
    <property type="project" value="UniProtKB-KW"/>
</dbReference>
<dbReference type="GO" id="GO:0016887">
    <property type="term" value="F:ATP hydrolysis activity"/>
    <property type="evidence" value="ECO:0007669"/>
    <property type="project" value="RHEA"/>
</dbReference>
<dbReference type="GO" id="GO:0003677">
    <property type="term" value="F:DNA binding"/>
    <property type="evidence" value="ECO:0007669"/>
    <property type="project" value="UniProtKB-KW"/>
</dbReference>
<dbReference type="GO" id="GO:0004519">
    <property type="term" value="F:endonuclease activity"/>
    <property type="evidence" value="ECO:0007669"/>
    <property type="project" value="UniProtKB-KW"/>
</dbReference>
<dbReference type="GO" id="GO:0004386">
    <property type="term" value="F:helicase activity"/>
    <property type="evidence" value="ECO:0007669"/>
    <property type="project" value="UniProtKB-KW"/>
</dbReference>
<dbReference type="GO" id="GO:0046872">
    <property type="term" value="F:metal ion binding"/>
    <property type="evidence" value="ECO:0007669"/>
    <property type="project" value="UniProtKB-KW"/>
</dbReference>
<dbReference type="GO" id="GO:0006260">
    <property type="term" value="P:DNA replication"/>
    <property type="evidence" value="ECO:0007669"/>
    <property type="project" value="UniProtKB-KW"/>
</dbReference>
<dbReference type="GO" id="GO:0039592">
    <property type="term" value="P:symbiont-mediated arrest of host cell cycle during G2/M transition"/>
    <property type="evidence" value="ECO:0007669"/>
    <property type="project" value="UniProtKB-KW"/>
</dbReference>
<dbReference type="GO" id="GO:0052150">
    <property type="term" value="P:symbiont-mediated perturbation of host apoptosis"/>
    <property type="evidence" value="ECO:0007669"/>
    <property type="project" value="UniProtKB-KW"/>
</dbReference>
<dbReference type="GO" id="GO:0039645">
    <property type="term" value="P:symbiont-mediated perturbation of host cell cycle G1/S transition checkpoint"/>
    <property type="evidence" value="ECO:0007669"/>
    <property type="project" value="UniProtKB-KW"/>
</dbReference>
<dbReference type="GO" id="GO:0039693">
    <property type="term" value="P:viral DNA genome replication"/>
    <property type="evidence" value="ECO:0007669"/>
    <property type="project" value="UniProtKB-KW"/>
</dbReference>
<dbReference type="Gene3D" id="3.40.1310.20">
    <property type="match status" value="1"/>
</dbReference>
<dbReference type="Gene3D" id="3.40.50.300">
    <property type="entry name" value="P-loop containing nucleotide triphosphate hydrolases"/>
    <property type="match status" value="1"/>
</dbReference>
<dbReference type="InterPro" id="IPR014015">
    <property type="entry name" value="Helicase_SF3_DNA-vir"/>
</dbReference>
<dbReference type="InterPro" id="IPR027417">
    <property type="entry name" value="P-loop_NTPase"/>
</dbReference>
<dbReference type="InterPro" id="IPR021972">
    <property type="entry name" value="Parvovirus_NS1_C"/>
</dbReference>
<dbReference type="InterPro" id="IPR001257">
    <property type="entry name" value="Parvovirus_NS1_helicase"/>
</dbReference>
<dbReference type="InterPro" id="IPR021076">
    <property type="entry name" value="Parvovirus_NS1_N"/>
</dbReference>
<dbReference type="InterPro" id="IPR049901">
    <property type="entry name" value="PV_NS1-NUC"/>
</dbReference>
<dbReference type="Pfam" id="PF12117">
    <property type="entry name" value="NS1_C"/>
    <property type="match status" value="1"/>
</dbReference>
<dbReference type="Pfam" id="PF01057">
    <property type="entry name" value="Parvo_NS1"/>
    <property type="match status" value="1"/>
</dbReference>
<dbReference type="Pfam" id="PF12433">
    <property type="entry name" value="PV_NSP1"/>
    <property type="match status" value="1"/>
</dbReference>
<dbReference type="SUPFAM" id="SSF55464">
    <property type="entry name" value="Origin of replication-binding domain, RBD-like"/>
    <property type="match status" value="1"/>
</dbReference>
<dbReference type="SUPFAM" id="SSF52540">
    <property type="entry name" value="P-loop containing nucleoside triphosphate hydrolases"/>
    <property type="match status" value="1"/>
</dbReference>
<dbReference type="PROSITE" id="PS52022">
    <property type="entry name" value="PV_NS1_NUC"/>
    <property type="match status" value="1"/>
</dbReference>
<dbReference type="PROSITE" id="PS51206">
    <property type="entry name" value="SF3_HELICASE_1"/>
    <property type="match status" value="1"/>
</dbReference>
<proteinExistence type="inferred from homology"/>
<sequence>MAAGNTYSEEVLKATNWLQDNAQKEAFSYVFKTQKVNLNGKEIAWNNYNKDTTDAEMINLQRGAETSWDQATDMEWESEIDSLTKGQVLIFDSLVKKCLFEGILQKNLSPSDCYWFIQHEHGQDTGYHCHVLLGGKGLQQAMGKWFRKQLNNLWSRWLIMQCKVPLTPVERIKLRELAEDGEWVSLLTYTHKQTKKQYTKMTHFGNMIAYYFLNKKRKTTEREHGYYLSSDSGFMTNFLKEGERHLVSHLFTEANKPETVETTVTTAQEAKRGKIQTKKEVSIKCTIRDLVNKRCTSIEDWMMTDPDSYIEMMAQTGGENLIKNTLEITTLTLARTKTAYDLILEKAKPSMLPTFNISNTRTCKIFSMHNWNYIKCCHAITCVLNRQGGKRNTILFHGPASTGKSIIAQHIANLVGNVGCYNAANVNFPFNDCTNKNLIWIEEAGNFSNQVNQFKAICSGQTIRIDQKGKGSKQIEPTPVIMTTNEDITKVRIGCEERPEHTQPIRDRMLNINLTRKLPGDFGLLEETEWPLICAWLVKKGYQATMASYMHHWGNVPDWSEKWEEPKMQTPINTPTDSQISTSVKTSPADNNYAATPIQEDLDLALALEPWSEPTTPTFTTALTQHARFSNTDTSPTWSEIETDIRACFGENCAPTTNLE</sequence>
<keyword id="KW-0067">ATP-binding</keyword>
<keyword id="KW-0190">Covalent protein-DNA linkage</keyword>
<keyword id="KW-0235">DNA replication</keyword>
<keyword id="KW-0238">DNA-binding</keyword>
<keyword id="KW-0255">Endonuclease</keyword>
<keyword id="KW-1078">G1/S host cell cycle checkpoint dysregulation by virus</keyword>
<keyword id="KW-0347">Helicase</keyword>
<keyword id="KW-1079">Host G2/M cell cycle arrest by virus</keyword>
<keyword id="KW-1048">Host nucleus</keyword>
<keyword id="KW-0945">Host-virus interaction</keyword>
<keyword id="KW-0378">Hydrolase</keyword>
<keyword id="KW-0460">Magnesium</keyword>
<keyword id="KW-0479">Metal-binding</keyword>
<keyword id="KW-1119">Modulation of host cell apoptosis by virus</keyword>
<keyword id="KW-1121">Modulation of host cell cycle by virus</keyword>
<keyword id="KW-0540">Nuclease</keyword>
<keyword id="KW-0547">Nucleotide-binding</keyword>
<keyword id="KW-0804">Transcription</keyword>
<keyword id="KW-0805">Transcription regulation</keyword>
<keyword id="KW-1194">Viral DNA replication</keyword>
<keyword id="KW-0231">Viral genome packaging</keyword>
<keyword id="KW-1188">Viral release from host cell</keyword>
<reference key="1">
    <citation type="journal article" date="1989" name="J. Gen. Virol.">
        <title>Porcine parvovirus: DNA sequence and genome organization.</title>
        <authorList>
            <person name="Ranz A.I."/>
            <person name="Manclus J.J."/>
            <person name="Diaz-Aroca E."/>
            <person name="Casal J.I."/>
        </authorList>
    </citation>
    <scope>NUCLEOTIDE SEQUENCE [GENOMIC DNA]</scope>
</reference>
<reference key="2">
    <citation type="journal article" date="1990" name="Virology">
        <title>The complete nucleotide sequence of an infectious clone of porcine parvovirus, strain NADL-2.</title>
        <authorList>
            <person name="Vasudevacharya J."/>
            <person name="Basak S."/>
            <person name="Srinivas R.V."/>
            <person name="Compans R.W."/>
        </authorList>
    </citation>
    <scope>NUCLEOTIDE SEQUENCE [GENOMIC DNA]</scope>
</reference>
<reference key="3">
    <citation type="journal article" date="1989" name="Virology">
        <title>Nucleotide sequence analysis of the capsid genes and the right-hand terminal palindrome of porcine parvovirus, strain NADL-2.</title>
        <authorList>
            <person name="Vasudevacharya J."/>
            <person name="Basak S."/>
            <person name="Srinivas R.V."/>
            <person name="Compans R.W."/>
        </authorList>
    </citation>
    <scope>NUCLEOTIDE SEQUENCE [GENOMIC DNA] OF 367-660</scope>
</reference>
<accession>P18547</accession>
<accession>P22965</accession>
<evidence type="ECO:0000250" key="1">
    <source>
        <dbReference type="UniProtKB" id="D0EZM8"/>
    </source>
</evidence>
<evidence type="ECO:0000250" key="2">
    <source>
        <dbReference type="UniProtKB" id="P03134"/>
    </source>
</evidence>
<evidence type="ECO:0000250" key="3">
    <source>
        <dbReference type="UniProtKB" id="Q9PZT1"/>
    </source>
</evidence>
<evidence type="ECO:0000255" key="4">
    <source>
        <dbReference type="PROSITE-ProRule" id="PRU00551"/>
    </source>
</evidence>
<evidence type="ECO:0000255" key="5">
    <source>
        <dbReference type="PROSITE-ProRule" id="PRU01366"/>
    </source>
</evidence>
<evidence type="ECO:0000305" key="6"/>
<organism>
    <name type="scientific">Porcine parvovirus (strain NADL-2)</name>
    <name type="common">PPV</name>
    <dbReference type="NCBI Taxonomy" id="10797"/>
    <lineage>
        <taxon>Viruses</taxon>
        <taxon>Monodnaviria</taxon>
        <taxon>Shotokuvirae</taxon>
        <taxon>Cossaviricota</taxon>
        <taxon>Quintoviricetes</taxon>
        <taxon>Piccovirales</taxon>
        <taxon>Parvoviridae</taxon>
        <taxon>Parvovirinae</taxon>
        <taxon>Protoparvovirus</taxon>
        <taxon>Protoparvovirus ungulate1</taxon>
    </lineage>
</organism>
<gene>
    <name type="primary">NS1</name>
</gene>
<protein>
    <recommendedName>
        <fullName evidence="2">Initiator protein NS1</fullName>
        <shortName>NS1</shortName>
        <ecNumber evidence="3">3.1.21.-</ecNumber>
        <ecNumber evidence="3">3.6.4.12</ecNumber>
    </recommendedName>
    <alternativeName>
        <fullName>NCVP1</fullName>
    </alternativeName>
    <alternativeName>
        <fullName>Non-capsid protein NS-1</fullName>
    </alternativeName>
    <alternativeName>
        <fullName>Non-structural protein 1</fullName>
    </alternativeName>
    <alternativeName>
        <fullName>Non-structural protein NS1</fullName>
    </alternativeName>
</protein>
<feature type="chain" id="PRO_0000222473" description="Initiator protein NS1">
    <location>
        <begin position="1"/>
        <end position="660"/>
    </location>
</feature>
<feature type="domain" description="PV NS1-Nuc" evidence="5">
    <location>
        <begin position="22"/>
        <end position="262"/>
    </location>
</feature>
<feature type="domain" description="SF3 helicase" evidence="4">
    <location>
        <begin position="365"/>
        <end position="527"/>
    </location>
</feature>
<feature type="region of interest" description="DNA-binding" evidence="2">
    <location>
        <begin position="2"/>
        <end position="275"/>
    </location>
</feature>
<feature type="region of interest" description="Ori-binding" evidence="2">
    <location>
        <begin position="192"/>
        <end position="196"/>
    </location>
</feature>
<feature type="short sequence motif" description="RCR-2" evidence="5">
    <location>
        <begin position="128"/>
        <end position="130"/>
    </location>
</feature>
<feature type="short sequence motif" description="RCR-3" evidence="5">
    <location>
        <begin position="211"/>
        <end position="215"/>
    </location>
</feature>
<feature type="active site" description="For nuclease activity" evidence="5">
    <location>
        <position position="211"/>
    </location>
</feature>
<feature type="binding site" evidence="5">
    <location>
        <position position="120"/>
    </location>
    <ligand>
        <name>a divalent metal cation</name>
        <dbReference type="ChEBI" id="CHEBI:60240"/>
    </ligand>
</feature>
<feature type="binding site" evidence="5">
    <location>
        <position position="128"/>
    </location>
    <ligand>
        <name>a divalent metal cation</name>
        <dbReference type="ChEBI" id="CHEBI:60240"/>
    </ligand>
</feature>
<feature type="binding site" evidence="5">
    <location>
        <position position="130"/>
    </location>
    <ligand>
        <name>a divalent metal cation</name>
        <dbReference type="ChEBI" id="CHEBI:60240"/>
    </ligand>
</feature>
<feature type="binding site" evidence="4">
    <location>
        <begin position="398"/>
        <end position="405"/>
    </location>
    <ligand>
        <name>ATP</name>
        <dbReference type="ChEBI" id="CHEBI:30616"/>
    </ligand>
</feature>
<feature type="sequence conflict" description="In Ref. 2; AAA46920." evidence="6" ref="2">
    <original>G</original>
    <variation>R</variation>
    <location>
        <position position="86"/>
    </location>
</feature>
<feature type="sequence conflict" description="In Ref. 2; AAA46920." evidence="6" ref="2">
    <original>K</original>
    <variation>R</variation>
    <location>
        <position position="274"/>
    </location>
</feature>
<feature type="sequence conflict" description="In Ref. 2; AAA46920/AAA46916." evidence="6" ref="2">
    <original>C</original>
    <variation>V</variation>
    <location>
        <position position="376"/>
    </location>
</feature>
<feature type="sequence conflict" description="In Ref. 2; AAA46920/AAA46916." evidence="6" ref="2">
    <original>TALTQHARFSNTDT</original>
    <variation>NLHLTPTPPDSAIRTP</variation>
    <location>
        <begin position="621"/>
        <end position="634"/>
    </location>
</feature>
<organismHost>
    <name type="scientific">Sus scrofa</name>
    <name type="common">Pig</name>
    <dbReference type="NCBI Taxonomy" id="9823"/>
</organismHost>
<name>NS1_PAVPN</name>